<dbReference type="EC" id="4.98.1.1" evidence="1"/>
<dbReference type="EMBL" id="CP001011">
    <property type="protein sequence ID" value="ACB93071.1"/>
    <property type="molecule type" value="Genomic_DNA"/>
</dbReference>
<dbReference type="RefSeq" id="WP_004088767.1">
    <property type="nucleotide sequence ID" value="NC_010577.1"/>
</dbReference>
<dbReference type="SMR" id="B2I7H7"/>
<dbReference type="GeneID" id="93905403"/>
<dbReference type="KEGG" id="xfn:XfasM23_1664"/>
<dbReference type="HOGENOM" id="CLU_018884_0_0_6"/>
<dbReference type="UniPathway" id="UPA00252">
    <property type="reaction ID" value="UER00325"/>
</dbReference>
<dbReference type="Proteomes" id="UP000001698">
    <property type="component" value="Chromosome"/>
</dbReference>
<dbReference type="GO" id="GO:0005737">
    <property type="term" value="C:cytoplasm"/>
    <property type="evidence" value="ECO:0007669"/>
    <property type="project" value="UniProtKB-SubCell"/>
</dbReference>
<dbReference type="GO" id="GO:0004325">
    <property type="term" value="F:ferrochelatase activity"/>
    <property type="evidence" value="ECO:0007669"/>
    <property type="project" value="UniProtKB-UniRule"/>
</dbReference>
<dbReference type="GO" id="GO:0046872">
    <property type="term" value="F:metal ion binding"/>
    <property type="evidence" value="ECO:0007669"/>
    <property type="project" value="UniProtKB-KW"/>
</dbReference>
<dbReference type="GO" id="GO:0006783">
    <property type="term" value="P:heme biosynthetic process"/>
    <property type="evidence" value="ECO:0007669"/>
    <property type="project" value="UniProtKB-UniRule"/>
</dbReference>
<dbReference type="CDD" id="cd00419">
    <property type="entry name" value="Ferrochelatase_C"/>
    <property type="match status" value="1"/>
</dbReference>
<dbReference type="CDD" id="cd03411">
    <property type="entry name" value="Ferrochelatase_N"/>
    <property type="match status" value="1"/>
</dbReference>
<dbReference type="FunFam" id="3.40.50.1400:FF:000012">
    <property type="entry name" value="Ferrochelatase"/>
    <property type="match status" value="1"/>
</dbReference>
<dbReference type="Gene3D" id="3.40.50.1400">
    <property type="match status" value="2"/>
</dbReference>
<dbReference type="HAMAP" id="MF_00323">
    <property type="entry name" value="Ferrochelatase"/>
    <property type="match status" value="1"/>
</dbReference>
<dbReference type="InterPro" id="IPR001015">
    <property type="entry name" value="Ferrochelatase"/>
</dbReference>
<dbReference type="InterPro" id="IPR019772">
    <property type="entry name" value="Ferrochelatase_AS"/>
</dbReference>
<dbReference type="InterPro" id="IPR033644">
    <property type="entry name" value="Ferrochelatase_C"/>
</dbReference>
<dbReference type="InterPro" id="IPR033659">
    <property type="entry name" value="Ferrochelatase_N"/>
</dbReference>
<dbReference type="NCBIfam" id="TIGR00109">
    <property type="entry name" value="hemH"/>
    <property type="match status" value="1"/>
</dbReference>
<dbReference type="PANTHER" id="PTHR11108">
    <property type="entry name" value="FERROCHELATASE"/>
    <property type="match status" value="1"/>
</dbReference>
<dbReference type="PANTHER" id="PTHR11108:SF1">
    <property type="entry name" value="FERROCHELATASE, MITOCHONDRIAL"/>
    <property type="match status" value="1"/>
</dbReference>
<dbReference type="Pfam" id="PF00762">
    <property type="entry name" value="Ferrochelatase"/>
    <property type="match status" value="1"/>
</dbReference>
<dbReference type="SUPFAM" id="SSF53800">
    <property type="entry name" value="Chelatase"/>
    <property type="match status" value="1"/>
</dbReference>
<dbReference type="PROSITE" id="PS00534">
    <property type="entry name" value="FERROCHELATASE"/>
    <property type="match status" value="1"/>
</dbReference>
<sequence length="320" mass="35657">MNHTSDTALLIVNLGTPEAPTAAAVRRYLGEFLSDRRVVSIPPLFWKPLLHMVILPIRGPRSASKYAKVWLQEGSPLSVYTRRIAEGLTQHLPDWRVAWAMRYGAPALTKALDALQAQQVRRIVILPLYPQYSTTTTASVQDVVEAWCKRTPQVQVECIQDYAEDPAWVAAVAASIRRHWQAHGRSEKLMFSFHGLPQRVANNGDPYPQRCQVSASLIAAALNLNESEWVLGYQSRFGAERWLQPYAEPTLWALAESGIRRFDLVCPGFSVDCLETLEEVALGFSETLAARGATMRYIPCLNDDPAHVQALAGLAQRALP</sequence>
<keyword id="KW-0963">Cytoplasm</keyword>
<keyword id="KW-0350">Heme biosynthesis</keyword>
<keyword id="KW-0408">Iron</keyword>
<keyword id="KW-0456">Lyase</keyword>
<keyword id="KW-0479">Metal-binding</keyword>
<keyword id="KW-0627">Porphyrin biosynthesis</keyword>
<proteinExistence type="inferred from homology"/>
<gene>
    <name evidence="1" type="primary">hemH</name>
    <name type="ordered locus">XfasM23_1664</name>
</gene>
<evidence type="ECO:0000255" key="1">
    <source>
        <dbReference type="HAMAP-Rule" id="MF_00323"/>
    </source>
</evidence>
<name>HEMH_XYLF2</name>
<comment type="function">
    <text evidence="1">Catalyzes the ferrous insertion into protoporphyrin IX.</text>
</comment>
<comment type="catalytic activity">
    <reaction evidence="1">
        <text>heme b + 2 H(+) = protoporphyrin IX + Fe(2+)</text>
        <dbReference type="Rhea" id="RHEA:22584"/>
        <dbReference type="ChEBI" id="CHEBI:15378"/>
        <dbReference type="ChEBI" id="CHEBI:29033"/>
        <dbReference type="ChEBI" id="CHEBI:57306"/>
        <dbReference type="ChEBI" id="CHEBI:60344"/>
        <dbReference type="EC" id="4.98.1.1"/>
    </reaction>
</comment>
<comment type="pathway">
    <text evidence="1">Porphyrin-containing compound metabolism; protoheme biosynthesis; protoheme from protoporphyrin-IX: step 1/1.</text>
</comment>
<comment type="subcellular location">
    <subcellularLocation>
        <location evidence="1">Cytoplasm</location>
    </subcellularLocation>
</comment>
<comment type="similarity">
    <text evidence="1">Belongs to the ferrochelatase family.</text>
</comment>
<reference key="1">
    <citation type="journal article" date="2010" name="J. Bacteriol.">
        <title>Whole genome sequences of two Xylella fastidiosa strains (M12 and M23) causing almond leaf scorch disease in California.</title>
        <authorList>
            <person name="Chen J."/>
            <person name="Xie G."/>
            <person name="Han S."/>
            <person name="Chertkov O."/>
            <person name="Sims D."/>
            <person name="Civerolo E.L."/>
        </authorList>
    </citation>
    <scope>NUCLEOTIDE SEQUENCE [LARGE SCALE GENOMIC DNA]</scope>
    <source>
        <strain>M23</strain>
    </source>
</reference>
<feature type="chain" id="PRO_1000116090" description="Ferrochelatase">
    <location>
        <begin position="1"/>
        <end position="320"/>
    </location>
</feature>
<feature type="binding site" evidence="1">
    <location>
        <position position="194"/>
    </location>
    <ligand>
        <name>Fe cation</name>
        <dbReference type="ChEBI" id="CHEBI:24875"/>
    </ligand>
</feature>
<feature type="binding site" evidence="1">
    <location>
        <position position="275"/>
    </location>
    <ligand>
        <name>Fe cation</name>
        <dbReference type="ChEBI" id="CHEBI:24875"/>
    </ligand>
</feature>
<accession>B2I7H7</accession>
<organism>
    <name type="scientific">Xylella fastidiosa (strain M23)</name>
    <dbReference type="NCBI Taxonomy" id="405441"/>
    <lineage>
        <taxon>Bacteria</taxon>
        <taxon>Pseudomonadati</taxon>
        <taxon>Pseudomonadota</taxon>
        <taxon>Gammaproteobacteria</taxon>
        <taxon>Lysobacterales</taxon>
        <taxon>Lysobacteraceae</taxon>
        <taxon>Xylella</taxon>
    </lineage>
</organism>
<protein>
    <recommendedName>
        <fullName evidence="1">Ferrochelatase</fullName>
        <ecNumber evidence="1">4.98.1.1</ecNumber>
    </recommendedName>
    <alternativeName>
        <fullName evidence="1">Heme synthase</fullName>
    </alternativeName>
    <alternativeName>
        <fullName evidence="1">Protoheme ferro-lyase</fullName>
    </alternativeName>
</protein>